<sequence length="185" mass="20953">MIDEALFDAEEKMEKAVSVAREDMATIRTGRANPGMFSRIVIDYYGTHTPITQLASINVPEARMVVIKPYEANQLHAIETAIRNSDLGVNPTNDGTIIRVAVPQLTEERRRDLVKQAKHKGEEARVSVRNIRRKAMEELHRIRKDGEAGEDEVARAEKDLDKSTHQYVAQIDELVKHKEGELLEV</sequence>
<evidence type="ECO:0000255" key="1">
    <source>
        <dbReference type="HAMAP-Rule" id="MF_00040"/>
    </source>
</evidence>
<evidence type="ECO:0000256" key="2">
    <source>
        <dbReference type="SAM" id="MobiDB-lite"/>
    </source>
</evidence>
<gene>
    <name evidence="1" type="primary">frr</name>
    <name type="ordered locus">MMAR_1827</name>
</gene>
<accession>B2HJP0</accession>
<name>RRF_MYCMM</name>
<proteinExistence type="inferred from homology"/>
<reference key="1">
    <citation type="journal article" date="2008" name="Genome Res.">
        <title>Insights from the complete genome sequence of Mycobacterium marinum on the evolution of Mycobacterium tuberculosis.</title>
        <authorList>
            <person name="Stinear T.P."/>
            <person name="Seemann T."/>
            <person name="Harrison P.F."/>
            <person name="Jenkin G.A."/>
            <person name="Davies J.K."/>
            <person name="Johnson P.D."/>
            <person name="Abdellah Z."/>
            <person name="Arrowsmith C."/>
            <person name="Chillingworth T."/>
            <person name="Churcher C."/>
            <person name="Clarke K."/>
            <person name="Cronin A."/>
            <person name="Davis P."/>
            <person name="Goodhead I."/>
            <person name="Holroyd N."/>
            <person name="Jagels K."/>
            <person name="Lord A."/>
            <person name="Moule S."/>
            <person name="Mungall K."/>
            <person name="Norbertczak H."/>
            <person name="Quail M.A."/>
            <person name="Rabbinowitsch E."/>
            <person name="Walker D."/>
            <person name="White B."/>
            <person name="Whitehead S."/>
            <person name="Small P.L."/>
            <person name="Brosch R."/>
            <person name="Ramakrishnan L."/>
            <person name="Fischbach M.A."/>
            <person name="Parkhill J."/>
            <person name="Cole S.T."/>
        </authorList>
    </citation>
    <scope>NUCLEOTIDE SEQUENCE [LARGE SCALE GENOMIC DNA]</scope>
    <source>
        <strain>ATCC BAA-535 / M</strain>
    </source>
</reference>
<keyword id="KW-0963">Cytoplasm</keyword>
<keyword id="KW-0648">Protein biosynthesis</keyword>
<keyword id="KW-1185">Reference proteome</keyword>
<feature type="chain" id="PRO_1000090761" description="Ribosome-recycling factor">
    <location>
        <begin position="1"/>
        <end position="185"/>
    </location>
</feature>
<feature type="region of interest" description="Disordered" evidence="2">
    <location>
        <begin position="143"/>
        <end position="163"/>
    </location>
</feature>
<organism>
    <name type="scientific">Mycobacterium marinum (strain ATCC BAA-535 / M)</name>
    <dbReference type="NCBI Taxonomy" id="216594"/>
    <lineage>
        <taxon>Bacteria</taxon>
        <taxon>Bacillati</taxon>
        <taxon>Actinomycetota</taxon>
        <taxon>Actinomycetes</taxon>
        <taxon>Mycobacteriales</taxon>
        <taxon>Mycobacteriaceae</taxon>
        <taxon>Mycobacterium</taxon>
        <taxon>Mycobacterium ulcerans group</taxon>
    </lineage>
</organism>
<dbReference type="EMBL" id="CP000854">
    <property type="protein sequence ID" value="ACC40276.1"/>
    <property type="molecule type" value="Genomic_DNA"/>
</dbReference>
<dbReference type="RefSeq" id="WP_012393625.1">
    <property type="nucleotide sequence ID" value="NC_010612.1"/>
</dbReference>
<dbReference type="SMR" id="B2HJP0"/>
<dbReference type="STRING" id="216594.MMAR_1827"/>
<dbReference type="GeneID" id="34340921"/>
<dbReference type="GeneID" id="93436401"/>
<dbReference type="KEGG" id="mmi:MMAR_1827"/>
<dbReference type="eggNOG" id="COG0233">
    <property type="taxonomic scope" value="Bacteria"/>
</dbReference>
<dbReference type="HOGENOM" id="CLU_073981_2_0_11"/>
<dbReference type="OrthoDB" id="9804006at2"/>
<dbReference type="Proteomes" id="UP000001190">
    <property type="component" value="Chromosome"/>
</dbReference>
<dbReference type="GO" id="GO:0005737">
    <property type="term" value="C:cytoplasm"/>
    <property type="evidence" value="ECO:0007669"/>
    <property type="project" value="UniProtKB-SubCell"/>
</dbReference>
<dbReference type="GO" id="GO:0043023">
    <property type="term" value="F:ribosomal large subunit binding"/>
    <property type="evidence" value="ECO:0007669"/>
    <property type="project" value="TreeGrafter"/>
</dbReference>
<dbReference type="GO" id="GO:0006415">
    <property type="term" value="P:translational termination"/>
    <property type="evidence" value="ECO:0007669"/>
    <property type="project" value="UniProtKB-UniRule"/>
</dbReference>
<dbReference type="CDD" id="cd00520">
    <property type="entry name" value="RRF"/>
    <property type="match status" value="1"/>
</dbReference>
<dbReference type="FunFam" id="1.10.132.20:FF:000001">
    <property type="entry name" value="Ribosome-recycling factor"/>
    <property type="match status" value="1"/>
</dbReference>
<dbReference type="FunFam" id="3.30.1360.40:FF:000001">
    <property type="entry name" value="Ribosome-recycling factor"/>
    <property type="match status" value="1"/>
</dbReference>
<dbReference type="Gene3D" id="3.30.1360.40">
    <property type="match status" value="1"/>
</dbReference>
<dbReference type="Gene3D" id="1.10.132.20">
    <property type="entry name" value="Ribosome-recycling factor"/>
    <property type="match status" value="1"/>
</dbReference>
<dbReference type="HAMAP" id="MF_00040">
    <property type="entry name" value="RRF"/>
    <property type="match status" value="1"/>
</dbReference>
<dbReference type="InterPro" id="IPR002661">
    <property type="entry name" value="Ribosome_recyc_fac"/>
</dbReference>
<dbReference type="InterPro" id="IPR023584">
    <property type="entry name" value="Ribosome_recyc_fac_dom"/>
</dbReference>
<dbReference type="InterPro" id="IPR036191">
    <property type="entry name" value="RRF_sf"/>
</dbReference>
<dbReference type="NCBIfam" id="TIGR00496">
    <property type="entry name" value="frr"/>
    <property type="match status" value="1"/>
</dbReference>
<dbReference type="PANTHER" id="PTHR20982:SF3">
    <property type="entry name" value="MITOCHONDRIAL RIBOSOME RECYCLING FACTOR PSEUDO 1"/>
    <property type="match status" value="1"/>
</dbReference>
<dbReference type="PANTHER" id="PTHR20982">
    <property type="entry name" value="RIBOSOME RECYCLING FACTOR"/>
    <property type="match status" value="1"/>
</dbReference>
<dbReference type="Pfam" id="PF01765">
    <property type="entry name" value="RRF"/>
    <property type="match status" value="1"/>
</dbReference>
<dbReference type="SUPFAM" id="SSF55194">
    <property type="entry name" value="Ribosome recycling factor, RRF"/>
    <property type="match status" value="1"/>
</dbReference>
<protein>
    <recommendedName>
        <fullName evidence="1">Ribosome-recycling factor</fullName>
        <shortName evidence="1">RRF</shortName>
    </recommendedName>
    <alternativeName>
        <fullName evidence="1">Ribosome-releasing factor</fullName>
    </alternativeName>
</protein>
<comment type="function">
    <text evidence="1">Responsible for the release of ribosomes from messenger RNA at the termination of protein biosynthesis. May increase the efficiency of translation by recycling ribosomes from one round of translation to another.</text>
</comment>
<comment type="subcellular location">
    <subcellularLocation>
        <location evidence="1">Cytoplasm</location>
    </subcellularLocation>
</comment>
<comment type="similarity">
    <text evidence="1">Belongs to the RRF family.</text>
</comment>